<organism>
    <name type="scientific">Geobacter sp. (strain M21)</name>
    <dbReference type="NCBI Taxonomy" id="443144"/>
    <lineage>
        <taxon>Bacteria</taxon>
        <taxon>Pseudomonadati</taxon>
        <taxon>Thermodesulfobacteriota</taxon>
        <taxon>Desulfuromonadia</taxon>
        <taxon>Geobacterales</taxon>
        <taxon>Geobacteraceae</taxon>
        <taxon>Geobacter</taxon>
    </lineage>
</organism>
<protein>
    <recommendedName>
        <fullName evidence="1">Exodeoxyribonuclease 7 large subunit</fullName>
        <ecNumber evidence="1">3.1.11.6</ecNumber>
    </recommendedName>
    <alternativeName>
        <fullName evidence="1">Exodeoxyribonuclease VII large subunit</fullName>
        <shortName evidence="1">Exonuclease VII large subunit</shortName>
    </alternativeName>
</protein>
<comment type="function">
    <text evidence="1">Bidirectionally degrades single-stranded DNA into large acid-insoluble oligonucleotides, which are then degraded further into small acid-soluble oligonucleotides.</text>
</comment>
<comment type="catalytic activity">
    <reaction evidence="1">
        <text>Exonucleolytic cleavage in either 5'- to 3'- or 3'- to 5'-direction to yield nucleoside 5'-phosphates.</text>
        <dbReference type="EC" id="3.1.11.6"/>
    </reaction>
</comment>
<comment type="subunit">
    <text evidence="1">Heterooligomer composed of large and small subunits.</text>
</comment>
<comment type="subcellular location">
    <subcellularLocation>
        <location evidence="1">Cytoplasm</location>
    </subcellularLocation>
</comment>
<comment type="similarity">
    <text evidence="1">Belongs to the XseA family.</text>
</comment>
<gene>
    <name evidence="1" type="primary">xseA</name>
    <name type="ordered locus">GM21_3028</name>
</gene>
<accession>C6E2U7</accession>
<proteinExistence type="inferred from homology"/>
<dbReference type="EC" id="3.1.11.6" evidence="1"/>
<dbReference type="EMBL" id="CP001661">
    <property type="protein sequence ID" value="ACT19057.1"/>
    <property type="molecule type" value="Genomic_DNA"/>
</dbReference>
<dbReference type="SMR" id="C6E2U7"/>
<dbReference type="STRING" id="443144.GM21_3028"/>
<dbReference type="KEGG" id="gem:GM21_3028"/>
<dbReference type="eggNOG" id="COG1570">
    <property type="taxonomic scope" value="Bacteria"/>
</dbReference>
<dbReference type="HOGENOM" id="CLU_023625_3_1_7"/>
<dbReference type="OrthoDB" id="9802795at2"/>
<dbReference type="GO" id="GO:0005737">
    <property type="term" value="C:cytoplasm"/>
    <property type="evidence" value="ECO:0007669"/>
    <property type="project" value="UniProtKB-SubCell"/>
</dbReference>
<dbReference type="GO" id="GO:0009318">
    <property type="term" value="C:exodeoxyribonuclease VII complex"/>
    <property type="evidence" value="ECO:0007669"/>
    <property type="project" value="InterPro"/>
</dbReference>
<dbReference type="GO" id="GO:0008855">
    <property type="term" value="F:exodeoxyribonuclease VII activity"/>
    <property type="evidence" value="ECO:0007669"/>
    <property type="project" value="UniProtKB-UniRule"/>
</dbReference>
<dbReference type="GO" id="GO:0003676">
    <property type="term" value="F:nucleic acid binding"/>
    <property type="evidence" value="ECO:0007669"/>
    <property type="project" value="InterPro"/>
</dbReference>
<dbReference type="GO" id="GO:0006308">
    <property type="term" value="P:DNA catabolic process"/>
    <property type="evidence" value="ECO:0007669"/>
    <property type="project" value="UniProtKB-UniRule"/>
</dbReference>
<dbReference type="CDD" id="cd04489">
    <property type="entry name" value="ExoVII_LU_OBF"/>
    <property type="match status" value="1"/>
</dbReference>
<dbReference type="HAMAP" id="MF_00378">
    <property type="entry name" value="Exonuc_7_L"/>
    <property type="match status" value="1"/>
</dbReference>
<dbReference type="InterPro" id="IPR003753">
    <property type="entry name" value="Exonuc_VII_L"/>
</dbReference>
<dbReference type="InterPro" id="IPR020579">
    <property type="entry name" value="Exonuc_VII_lsu_C"/>
</dbReference>
<dbReference type="InterPro" id="IPR025824">
    <property type="entry name" value="OB-fold_nuc-bd_dom"/>
</dbReference>
<dbReference type="NCBIfam" id="TIGR00237">
    <property type="entry name" value="xseA"/>
    <property type="match status" value="1"/>
</dbReference>
<dbReference type="PANTHER" id="PTHR30008">
    <property type="entry name" value="EXODEOXYRIBONUCLEASE 7 LARGE SUBUNIT"/>
    <property type="match status" value="1"/>
</dbReference>
<dbReference type="PANTHER" id="PTHR30008:SF0">
    <property type="entry name" value="EXODEOXYRIBONUCLEASE 7 LARGE SUBUNIT"/>
    <property type="match status" value="1"/>
</dbReference>
<dbReference type="Pfam" id="PF02601">
    <property type="entry name" value="Exonuc_VII_L"/>
    <property type="match status" value="1"/>
</dbReference>
<dbReference type="Pfam" id="PF13742">
    <property type="entry name" value="tRNA_anti_2"/>
    <property type="match status" value="1"/>
</dbReference>
<feature type="chain" id="PRO_1000205676" description="Exodeoxyribonuclease 7 large subunit">
    <location>
        <begin position="1"/>
        <end position="458"/>
    </location>
</feature>
<name>EX7L_GEOSM</name>
<reference key="1">
    <citation type="submission" date="2009-07" db="EMBL/GenBank/DDBJ databases">
        <title>Complete sequence of Geobacter sp. M21.</title>
        <authorList>
            <consortium name="US DOE Joint Genome Institute"/>
            <person name="Lucas S."/>
            <person name="Copeland A."/>
            <person name="Lapidus A."/>
            <person name="Glavina del Rio T."/>
            <person name="Dalin E."/>
            <person name="Tice H."/>
            <person name="Bruce D."/>
            <person name="Goodwin L."/>
            <person name="Pitluck S."/>
            <person name="Saunders E."/>
            <person name="Brettin T."/>
            <person name="Detter J.C."/>
            <person name="Han C."/>
            <person name="Larimer F."/>
            <person name="Land M."/>
            <person name="Hauser L."/>
            <person name="Kyrpides N."/>
            <person name="Ovchinnikova G."/>
            <person name="Lovley D."/>
        </authorList>
    </citation>
    <scope>NUCLEOTIDE SEQUENCE [LARGE SCALE GENOMIC DNA]</scope>
    <source>
        <strain>M21</strain>
    </source>
</reference>
<sequence length="458" mass="50161">MQLFKERRVLTVSALTALVRGLLEENFEQVWVEGEISNLACPQSGHCYFTLKDAGAQIRCVMFRGAFRSLKFTPRDGMRILTRGRLTLFEPRGEYQLVADYLEPQGIGGLQMAFIQLKEKLAKEGLFSELHKIEIPKLPRRIGIVTSPTGAAIRDILTVLNRRFTNVELLISPVRVQGEGAAREIADAIDDLNRVGNIDVMIVGRGGGSLEDLWAFNEEVVARAIHRSKVPVISAVGHEIDFTIADFVADLRAATPSAAAELVVASKKELTAEVEALSHRLHVSQQRRLERSRALVTALSRAITDPSRVLGHLAQRVDSLDARLVREAGLILDDASERIVTLTARLSRQTPALTLKRWEERLATLSLRLDHAMTRRLACAAESVGLATGTLNAVSPLATLSRGYSITRKLPARSVVTSSRQLAPGDRVEVSFAAGSALCTVEQASRESDSLTAPPRSV</sequence>
<keyword id="KW-0963">Cytoplasm</keyword>
<keyword id="KW-0269">Exonuclease</keyword>
<keyword id="KW-0378">Hydrolase</keyword>
<keyword id="KW-0540">Nuclease</keyword>
<evidence type="ECO:0000255" key="1">
    <source>
        <dbReference type="HAMAP-Rule" id="MF_00378"/>
    </source>
</evidence>